<name>RL24_STRS2</name>
<protein>
    <recommendedName>
        <fullName evidence="1">Large ribosomal subunit protein uL24</fullName>
    </recommendedName>
    <alternativeName>
        <fullName evidence="2">50S ribosomal protein L24</fullName>
    </alternativeName>
</protein>
<dbReference type="EMBL" id="CP000408">
    <property type="protein sequence ID" value="ABP91243.1"/>
    <property type="molecule type" value="Genomic_DNA"/>
</dbReference>
<dbReference type="SMR" id="A4VYQ4"/>
<dbReference type="KEGG" id="ssv:SSU98_0083"/>
<dbReference type="HOGENOM" id="CLU_093315_2_0_9"/>
<dbReference type="GO" id="GO:1990904">
    <property type="term" value="C:ribonucleoprotein complex"/>
    <property type="evidence" value="ECO:0007669"/>
    <property type="project" value="UniProtKB-KW"/>
</dbReference>
<dbReference type="GO" id="GO:0005840">
    <property type="term" value="C:ribosome"/>
    <property type="evidence" value="ECO:0007669"/>
    <property type="project" value="UniProtKB-KW"/>
</dbReference>
<dbReference type="GO" id="GO:0019843">
    <property type="term" value="F:rRNA binding"/>
    <property type="evidence" value="ECO:0007669"/>
    <property type="project" value="UniProtKB-UniRule"/>
</dbReference>
<dbReference type="GO" id="GO:0003735">
    <property type="term" value="F:structural constituent of ribosome"/>
    <property type="evidence" value="ECO:0007669"/>
    <property type="project" value="InterPro"/>
</dbReference>
<dbReference type="GO" id="GO:0006412">
    <property type="term" value="P:translation"/>
    <property type="evidence" value="ECO:0007669"/>
    <property type="project" value="UniProtKB-UniRule"/>
</dbReference>
<dbReference type="CDD" id="cd06089">
    <property type="entry name" value="KOW_RPL26"/>
    <property type="match status" value="1"/>
</dbReference>
<dbReference type="FunFam" id="2.30.30.30:FF:000004">
    <property type="entry name" value="50S ribosomal protein L24"/>
    <property type="match status" value="1"/>
</dbReference>
<dbReference type="Gene3D" id="2.30.30.30">
    <property type="match status" value="1"/>
</dbReference>
<dbReference type="HAMAP" id="MF_01326_B">
    <property type="entry name" value="Ribosomal_uL24_B"/>
    <property type="match status" value="1"/>
</dbReference>
<dbReference type="InterPro" id="IPR005824">
    <property type="entry name" value="KOW"/>
</dbReference>
<dbReference type="InterPro" id="IPR014722">
    <property type="entry name" value="Rib_uL2_dom2"/>
</dbReference>
<dbReference type="InterPro" id="IPR003256">
    <property type="entry name" value="Ribosomal_uL24"/>
</dbReference>
<dbReference type="InterPro" id="IPR005825">
    <property type="entry name" value="Ribosomal_uL24_CS"/>
</dbReference>
<dbReference type="InterPro" id="IPR041988">
    <property type="entry name" value="Ribosomal_uL24_KOW"/>
</dbReference>
<dbReference type="InterPro" id="IPR008991">
    <property type="entry name" value="Translation_prot_SH3-like_sf"/>
</dbReference>
<dbReference type="NCBIfam" id="TIGR01079">
    <property type="entry name" value="rplX_bact"/>
    <property type="match status" value="1"/>
</dbReference>
<dbReference type="PANTHER" id="PTHR12903">
    <property type="entry name" value="MITOCHONDRIAL RIBOSOMAL PROTEIN L24"/>
    <property type="match status" value="1"/>
</dbReference>
<dbReference type="Pfam" id="PF00467">
    <property type="entry name" value="KOW"/>
    <property type="match status" value="1"/>
</dbReference>
<dbReference type="Pfam" id="PF17136">
    <property type="entry name" value="ribosomal_L24"/>
    <property type="match status" value="1"/>
</dbReference>
<dbReference type="SMART" id="SM00739">
    <property type="entry name" value="KOW"/>
    <property type="match status" value="1"/>
</dbReference>
<dbReference type="SUPFAM" id="SSF50104">
    <property type="entry name" value="Translation proteins SH3-like domain"/>
    <property type="match status" value="1"/>
</dbReference>
<dbReference type="PROSITE" id="PS01108">
    <property type="entry name" value="RIBOSOMAL_L24"/>
    <property type="match status" value="1"/>
</dbReference>
<accession>A4VYQ4</accession>
<comment type="function">
    <text evidence="1">One of two assembly initiator proteins, it binds directly to the 5'-end of the 23S rRNA, where it nucleates assembly of the 50S subunit.</text>
</comment>
<comment type="function">
    <text evidence="1">One of the proteins that surrounds the polypeptide exit tunnel on the outside of the subunit.</text>
</comment>
<comment type="subunit">
    <text evidence="1">Part of the 50S ribosomal subunit.</text>
</comment>
<comment type="similarity">
    <text evidence="1">Belongs to the universal ribosomal protein uL24 family.</text>
</comment>
<keyword id="KW-0687">Ribonucleoprotein</keyword>
<keyword id="KW-0689">Ribosomal protein</keyword>
<keyword id="KW-0694">RNA-binding</keyword>
<keyword id="KW-0699">rRNA-binding</keyword>
<evidence type="ECO:0000255" key="1">
    <source>
        <dbReference type="HAMAP-Rule" id="MF_01326"/>
    </source>
</evidence>
<evidence type="ECO:0000305" key="2"/>
<feature type="chain" id="PRO_1000052325" description="Large ribosomal subunit protein uL24">
    <location>
        <begin position="1"/>
        <end position="101"/>
    </location>
</feature>
<proteinExistence type="inferred from homology"/>
<organism>
    <name type="scientific">Streptococcus suis (strain 98HAH33)</name>
    <dbReference type="NCBI Taxonomy" id="391296"/>
    <lineage>
        <taxon>Bacteria</taxon>
        <taxon>Bacillati</taxon>
        <taxon>Bacillota</taxon>
        <taxon>Bacilli</taxon>
        <taxon>Lactobacillales</taxon>
        <taxon>Streptococcaceae</taxon>
        <taxon>Streptococcus</taxon>
    </lineage>
</organism>
<reference key="1">
    <citation type="journal article" date="2007" name="PLoS ONE">
        <title>A glimpse of streptococcal toxic shock syndrome from comparative genomics of S. suis 2 Chinese isolates.</title>
        <authorList>
            <person name="Chen C."/>
            <person name="Tang J."/>
            <person name="Dong W."/>
            <person name="Wang C."/>
            <person name="Feng Y."/>
            <person name="Wang J."/>
            <person name="Zheng F."/>
            <person name="Pan X."/>
            <person name="Liu D."/>
            <person name="Li M."/>
            <person name="Song Y."/>
            <person name="Zhu X."/>
            <person name="Sun H."/>
            <person name="Feng T."/>
            <person name="Guo Z."/>
            <person name="Ju A."/>
            <person name="Ge J."/>
            <person name="Dong Y."/>
            <person name="Sun W."/>
            <person name="Jiang Y."/>
            <person name="Wang J."/>
            <person name="Yan J."/>
            <person name="Yang H."/>
            <person name="Wang X."/>
            <person name="Gao G.F."/>
            <person name="Yang R."/>
            <person name="Wang J."/>
            <person name="Yu J."/>
        </authorList>
    </citation>
    <scope>NUCLEOTIDE SEQUENCE [LARGE SCALE GENOMIC DNA]</scope>
    <source>
        <strain>98HAH33</strain>
    </source>
</reference>
<gene>
    <name evidence="1" type="primary">rplX</name>
    <name type="ordered locus">SSU98_0083</name>
</gene>
<sequence length="101" mass="10950">MFVKKGDKVRVIAGKDKGVEAVVVTALPKVNKVIVEGVNIVKKHQKSNSENPQGAIVEKEAPIHVSNVQVLDKNGVAGRVGYKFVDGKKVRYNKKSGEVLD</sequence>